<organism>
    <name type="scientific">Clostridium botulinum (strain Kyoto / Type A2)</name>
    <dbReference type="NCBI Taxonomy" id="536232"/>
    <lineage>
        <taxon>Bacteria</taxon>
        <taxon>Bacillati</taxon>
        <taxon>Bacillota</taxon>
        <taxon>Clostridia</taxon>
        <taxon>Eubacteriales</taxon>
        <taxon>Clostridiaceae</taxon>
        <taxon>Clostridium</taxon>
    </lineage>
</organism>
<accession>C1FQ26</accession>
<protein>
    <recommendedName>
        <fullName evidence="1">2-C-methyl-D-erythritol 2,4-cyclodiphosphate synthase</fullName>
        <shortName evidence="1">MECDP-synthase</shortName>
        <shortName evidence="1">MECPP-synthase</shortName>
        <shortName evidence="1">MECPS</shortName>
        <ecNumber evidence="1">4.6.1.12</ecNumber>
    </recommendedName>
</protein>
<comment type="function">
    <text evidence="1">Involved in the biosynthesis of isopentenyl diphosphate (IPP) and dimethylallyl diphosphate (DMAPP), two major building blocks of isoprenoid compounds. Catalyzes the conversion of 4-diphosphocytidyl-2-C-methyl-D-erythritol 2-phosphate (CDP-ME2P) to 2-C-methyl-D-erythritol 2,4-cyclodiphosphate (ME-CPP) with a corresponding release of cytidine 5-monophosphate (CMP).</text>
</comment>
<comment type="catalytic activity">
    <reaction evidence="1">
        <text>4-CDP-2-C-methyl-D-erythritol 2-phosphate = 2-C-methyl-D-erythritol 2,4-cyclic diphosphate + CMP</text>
        <dbReference type="Rhea" id="RHEA:23864"/>
        <dbReference type="ChEBI" id="CHEBI:57919"/>
        <dbReference type="ChEBI" id="CHEBI:58483"/>
        <dbReference type="ChEBI" id="CHEBI:60377"/>
        <dbReference type="EC" id="4.6.1.12"/>
    </reaction>
</comment>
<comment type="cofactor">
    <cofactor evidence="1">
        <name>a divalent metal cation</name>
        <dbReference type="ChEBI" id="CHEBI:60240"/>
    </cofactor>
    <text evidence="1">Binds 1 divalent metal cation per subunit.</text>
</comment>
<comment type="pathway">
    <text evidence="1">Isoprenoid biosynthesis; isopentenyl diphosphate biosynthesis via DXP pathway; isopentenyl diphosphate from 1-deoxy-D-xylulose 5-phosphate: step 4/6.</text>
</comment>
<comment type="subunit">
    <text evidence="1">Homotrimer.</text>
</comment>
<comment type="similarity">
    <text evidence="1">Belongs to the IspF family.</text>
</comment>
<sequence length="155" mass="16864">MRIGLGYDVHKLVEDRPLIIGGVTIPHDKGLLGHSDADVLVHAIMDALLGAAALGDIGKHFPDSDKNFKNISSLLLLSKVKDLINKEGYKIVNIDCTIIAQKPKMLYHIDAMKKNICKCLKLDNNMLNIKATTEEGLGFTGKEEGISANAICLLD</sequence>
<reference key="1">
    <citation type="submission" date="2008-10" db="EMBL/GenBank/DDBJ databases">
        <title>Genome sequence of Clostridium botulinum A2 Kyoto.</title>
        <authorList>
            <person name="Shrivastava S."/>
            <person name="Brinkac L.M."/>
            <person name="Brown J.L."/>
            <person name="Bruce D."/>
            <person name="Detter C.C."/>
            <person name="Johnson E.A."/>
            <person name="Munk C.A."/>
            <person name="Smith L.A."/>
            <person name="Smith T.J."/>
            <person name="Sutton G."/>
            <person name="Brettin T.S."/>
        </authorList>
    </citation>
    <scope>NUCLEOTIDE SEQUENCE [LARGE SCALE GENOMIC DNA]</scope>
    <source>
        <strain>Kyoto / Type A2</strain>
    </source>
</reference>
<evidence type="ECO:0000255" key="1">
    <source>
        <dbReference type="HAMAP-Rule" id="MF_00107"/>
    </source>
</evidence>
<gene>
    <name evidence="1" type="primary">ispF</name>
    <name type="ordered locus">CLM_0110</name>
</gene>
<keyword id="KW-0414">Isoprene biosynthesis</keyword>
<keyword id="KW-0456">Lyase</keyword>
<keyword id="KW-0479">Metal-binding</keyword>
<dbReference type="EC" id="4.6.1.12" evidence="1"/>
<dbReference type="EMBL" id="CP001581">
    <property type="protein sequence ID" value="ACO85919.1"/>
    <property type="molecule type" value="Genomic_DNA"/>
</dbReference>
<dbReference type="RefSeq" id="WP_012705021.1">
    <property type="nucleotide sequence ID" value="NC_012563.1"/>
</dbReference>
<dbReference type="SMR" id="C1FQ26"/>
<dbReference type="KEGG" id="cby:CLM_0110"/>
<dbReference type="eggNOG" id="COG0245">
    <property type="taxonomic scope" value="Bacteria"/>
</dbReference>
<dbReference type="HOGENOM" id="CLU_084630_2_0_9"/>
<dbReference type="UniPathway" id="UPA00056">
    <property type="reaction ID" value="UER00095"/>
</dbReference>
<dbReference type="Proteomes" id="UP000001374">
    <property type="component" value="Chromosome"/>
</dbReference>
<dbReference type="GO" id="GO:0008685">
    <property type="term" value="F:2-C-methyl-D-erythritol 2,4-cyclodiphosphate synthase activity"/>
    <property type="evidence" value="ECO:0007669"/>
    <property type="project" value="UniProtKB-UniRule"/>
</dbReference>
<dbReference type="GO" id="GO:0046872">
    <property type="term" value="F:metal ion binding"/>
    <property type="evidence" value="ECO:0007669"/>
    <property type="project" value="UniProtKB-KW"/>
</dbReference>
<dbReference type="GO" id="GO:0019288">
    <property type="term" value="P:isopentenyl diphosphate biosynthetic process, methylerythritol 4-phosphate pathway"/>
    <property type="evidence" value="ECO:0007669"/>
    <property type="project" value="UniProtKB-UniRule"/>
</dbReference>
<dbReference type="GO" id="GO:0016114">
    <property type="term" value="P:terpenoid biosynthetic process"/>
    <property type="evidence" value="ECO:0007669"/>
    <property type="project" value="InterPro"/>
</dbReference>
<dbReference type="CDD" id="cd00554">
    <property type="entry name" value="MECDP_synthase"/>
    <property type="match status" value="1"/>
</dbReference>
<dbReference type="FunFam" id="3.30.1330.50:FF:000001">
    <property type="entry name" value="2-C-methyl-D-erythritol 2,4-cyclodiphosphate synthase"/>
    <property type="match status" value="1"/>
</dbReference>
<dbReference type="Gene3D" id="3.30.1330.50">
    <property type="entry name" value="2-C-methyl-D-erythritol 2,4-cyclodiphosphate synthase"/>
    <property type="match status" value="1"/>
</dbReference>
<dbReference type="HAMAP" id="MF_00107">
    <property type="entry name" value="IspF"/>
    <property type="match status" value="1"/>
</dbReference>
<dbReference type="InterPro" id="IPR003526">
    <property type="entry name" value="MECDP_synthase"/>
</dbReference>
<dbReference type="InterPro" id="IPR020555">
    <property type="entry name" value="MECDP_synthase_CS"/>
</dbReference>
<dbReference type="InterPro" id="IPR036571">
    <property type="entry name" value="MECDP_synthase_sf"/>
</dbReference>
<dbReference type="NCBIfam" id="TIGR00151">
    <property type="entry name" value="ispF"/>
    <property type="match status" value="1"/>
</dbReference>
<dbReference type="PANTHER" id="PTHR43181">
    <property type="entry name" value="2-C-METHYL-D-ERYTHRITOL 2,4-CYCLODIPHOSPHATE SYNTHASE, CHLOROPLASTIC"/>
    <property type="match status" value="1"/>
</dbReference>
<dbReference type="PANTHER" id="PTHR43181:SF1">
    <property type="entry name" value="2-C-METHYL-D-ERYTHRITOL 2,4-CYCLODIPHOSPHATE SYNTHASE, CHLOROPLASTIC"/>
    <property type="match status" value="1"/>
</dbReference>
<dbReference type="Pfam" id="PF02542">
    <property type="entry name" value="YgbB"/>
    <property type="match status" value="1"/>
</dbReference>
<dbReference type="SUPFAM" id="SSF69765">
    <property type="entry name" value="IpsF-like"/>
    <property type="match status" value="1"/>
</dbReference>
<dbReference type="PROSITE" id="PS01350">
    <property type="entry name" value="ISPF"/>
    <property type="match status" value="1"/>
</dbReference>
<proteinExistence type="inferred from homology"/>
<name>ISPF_CLOBJ</name>
<feature type="chain" id="PRO_1000118999" description="2-C-methyl-D-erythritol 2,4-cyclodiphosphate synthase">
    <location>
        <begin position="1"/>
        <end position="155"/>
    </location>
</feature>
<feature type="binding site" evidence="1">
    <location>
        <begin position="8"/>
        <end position="10"/>
    </location>
    <ligand>
        <name>4-CDP-2-C-methyl-D-erythritol 2-phosphate</name>
        <dbReference type="ChEBI" id="CHEBI:57919"/>
    </ligand>
</feature>
<feature type="binding site" evidence="1">
    <location>
        <position position="8"/>
    </location>
    <ligand>
        <name>a divalent metal cation</name>
        <dbReference type="ChEBI" id="CHEBI:60240"/>
    </ligand>
</feature>
<feature type="binding site" evidence="1">
    <location>
        <position position="10"/>
    </location>
    <ligand>
        <name>a divalent metal cation</name>
        <dbReference type="ChEBI" id="CHEBI:60240"/>
    </ligand>
</feature>
<feature type="binding site" evidence="1">
    <location>
        <begin position="34"/>
        <end position="35"/>
    </location>
    <ligand>
        <name>4-CDP-2-C-methyl-D-erythritol 2-phosphate</name>
        <dbReference type="ChEBI" id="CHEBI:57919"/>
    </ligand>
</feature>
<feature type="binding site" evidence="1">
    <location>
        <position position="42"/>
    </location>
    <ligand>
        <name>a divalent metal cation</name>
        <dbReference type="ChEBI" id="CHEBI:60240"/>
    </ligand>
</feature>
<feature type="binding site" evidence="1">
    <location>
        <begin position="56"/>
        <end position="58"/>
    </location>
    <ligand>
        <name>4-CDP-2-C-methyl-D-erythritol 2-phosphate</name>
        <dbReference type="ChEBI" id="CHEBI:57919"/>
    </ligand>
</feature>
<feature type="binding site" evidence="1">
    <location>
        <begin position="61"/>
        <end position="65"/>
    </location>
    <ligand>
        <name>4-CDP-2-C-methyl-D-erythritol 2-phosphate</name>
        <dbReference type="ChEBI" id="CHEBI:57919"/>
    </ligand>
</feature>
<feature type="binding site" evidence="1">
    <location>
        <begin position="100"/>
        <end position="106"/>
    </location>
    <ligand>
        <name>4-CDP-2-C-methyl-D-erythritol 2-phosphate</name>
        <dbReference type="ChEBI" id="CHEBI:57919"/>
    </ligand>
</feature>
<feature type="binding site" evidence="1">
    <location>
        <begin position="132"/>
        <end position="135"/>
    </location>
    <ligand>
        <name>4-CDP-2-C-methyl-D-erythritol 2-phosphate</name>
        <dbReference type="ChEBI" id="CHEBI:57919"/>
    </ligand>
</feature>
<feature type="binding site" evidence="1">
    <location>
        <position position="139"/>
    </location>
    <ligand>
        <name>4-CDP-2-C-methyl-D-erythritol 2-phosphate</name>
        <dbReference type="ChEBI" id="CHEBI:57919"/>
    </ligand>
</feature>
<feature type="binding site" evidence="1">
    <location>
        <position position="142"/>
    </location>
    <ligand>
        <name>4-CDP-2-C-methyl-D-erythritol 2-phosphate</name>
        <dbReference type="ChEBI" id="CHEBI:57919"/>
    </ligand>
</feature>
<feature type="site" description="Transition state stabilizer" evidence="1">
    <location>
        <position position="34"/>
    </location>
</feature>
<feature type="site" description="Transition state stabilizer" evidence="1">
    <location>
        <position position="133"/>
    </location>
</feature>